<proteinExistence type="inferred from homology"/>
<protein>
    <recommendedName>
        <fullName evidence="1">Protein ApaG</fullName>
    </recommendedName>
</protein>
<gene>
    <name evidence="1" type="primary">apaG</name>
    <name type="ordered locus">SARI_02915</name>
</gene>
<dbReference type="EMBL" id="CP000880">
    <property type="protein sequence ID" value="ABX22761.1"/>
    <property type="molecule type" value="Genomic_DNA"/>
</dbReference>
<dbReference type="SMR" id="A9MQG3"/>
<dbReference type="STRING" id="41514.SARI_02915"/>
<dbReference type="KEGG" id="ses:SARI_02915"/>
<dbReference type="HOGENOM" id="CLU_128074_0_0_6"/>
<dbReference type="Proteomes" id="UP000002084">
    <property type="component" value="Chromosome"/>
</dbReference>
<dbReference type="GO" id="GO:0070987">
    <property type="term" value="P:error-free translesion synthesis"/>
    <property type="evidence" value="ECO:0007669"/>
    <property type="project" value="TreeGrafter"/>
</dbReference>
<dbReference type="Gene3D" id="2.60.40.1470">
    <property type="entry name" value="ApaG domain"/>
    <property type="match status" value="1"/>
</dbReference>
<dbReference type="HAMAP" id="MF_00791">
    <property type="entry name" value="ApaG"/>
    <property type="match status" value="1"/>
</dbReference>
<dbReference type="InterPro" id="IPR007474">
    <property type="entry name" value="ApaG_domain"/>
</dbReference>
<dbReference type="InterPro" id="IPR036767">
    <property type="entry name" value="ApaG_sf"/>
</dbReference>
<dbReference type="InterPro" id="IPR023065">
    <property type="entry name" value="Uncharacterised_ApaG"/>
</dbReference>
<dbReference type="NCBIfam" id="NF003967">
    <property type="entry name" value="PRK05461.1"/>
    <property type="match status" value="1"/>
</dbReference>
<dbReference type="PANTHER" id="PTHR14289">
    <property type="entry name" value="F-BOX ONLY PROTEIN 3"/>
    <property type="match status" value="1"/>
</dbReference>
<dbReference type="PANTHER" id="PTHR14289:SF16">
    <property type="entry name" value="POLYMERASE DELTA-INTERACTING PROTEIN 2"/>
    <property type="match status" value="1"/>
</dbReference>
<dbReference type="Pfam" id="PF04379">
    <property type="entry name" value="DUF525"/>
    <property type="match status" value="1"/>
</dbReference>
<dbReference type="SUPFAM" id="SSF110069">
    <property type="entry name" value="ApaG-like"/>
    <property type="match status" value="1"/>
</dbReference>
<dbReference type="PROSITE" id="PS51087">
    <property type="entry name" value="APAG"/>
    <property type="match status" value="1"/>
</dbReference>
<evidence type="ECO:0000255" key="1">
    <source>
        <dbReference type="HAMAP-Rule" id="MF_00791"/>
    </source>
</evidence>
<sequence length="125" mass="13924">MINSPRVCIQVQSVYIEAQSSPDDERYVFAYTVTIRNLGRAPVQLLGRYWLITNGHGRETEVQGEGVVGVQPRIAPGEEYQYTSGAVIETPLGTMQGHYEMIDENGDAFTIDIPVFRLAVPTLIH</sequence>
<reference key="1">
    <citation type="submission" date="2007-11" db="EMBL/GenBank/DDBJ databases">
        <authorList>
            <consortium name="The Salmonella enterica serovar Arizonae Genome Sequencing Project"/>
            <person name="McClelland M."/>
            <person name="Sanderson E.K."/>
            <person name="Porwollik S."/>
            <person name="Spieth J."/>
            <person name="Clifton W.S."/>
            <person name="Fulton R."/>
            <person name="Chunyan W."/>
            <person name="Wollam A."/>
            <person name="Shah N."/>
            <person name="Pepin K."/>
            <person name="Bhonagiri V."/>
            <person name="Nash W."/>
            <person name="Johnson M."/>
            <person name="Thiruvilangam P."/>
            <person name="Wilson R."/>
        </authorList>
    </citation>
    <scope>NUCLEOTIDE SEQUENCE [LARGE SCALE GENOMIC DNA]</scope>
    <source>
        <strain>ATCC BAA-731 / CDC346-86 / RSK2980</strain>
    </source>
</reference>
<accession>A9MQG3</accession>
<organism>
    <name type="scientific">Salmonella arizonae (strain ATCC BAA-731 / CDC346-86 / RSK2980)</name>
    <dbReference type="NCBI Taxonomy" id="41514"/>
    <lineage>
        <taxon>Bacteria</taxon>
        <taxon>Pseudomonadati</taxon>
        <taxon>Pseudomonadota</taxon>
        <taxon>Gammaproteobacteria</taxon>
        <taxon>Enterobacterales</taxon>
        <taxon>Enterobacteriaceae</taxon>
        <taxon>Salmonella</taxon>
    </lineage>
</organism>
<name>APAG_SALAR</name>
<feature type="chain" id="PRO_1000083640" description="Protein ApaG">
    <location>
        <begin position="1"/>
        <end position="125"/>
    </location>
</feature>
<feature type="domain" description="ApaG" evidence="1">
    <location>
        <begin position="1"/>
        <end position="125"/>
    </location>
</feature>
<keyword id="KW-1185">Reference proteome</keyword>